<feature type="chain" id="PRO_0000340379" description="DNA ligase">
    <location>
        <begin position="1"/>
        <end position="673"/>
    </location>
</feature>
<feature type="domain" description="BRCT" evidence="1">
    <location>
        <begin position="595"/>
        <end position="673"/>
    </location>
</feature>
<feature type="active site" description="N6-AMP-lysine intermediate" evidence="1">
    <location>
        <position position="115"/>
    </location>
</feature>
<feature type="binding site" evidence="1">
    <location>
        <begin position="32"/>
        <end position="36"/>
    </location>
    <ligand>
        <name>NAD(+)</name>
        <dbReference type="ChEBI" id="CHEBI:57540"/>
    </ligand>
</feature>
<feature type="binding site" evidence="1">
    <location>
        <begin position="81"/>
        <end position="82"/>
    </location>
    <ligand>
        <name>NAD(+)</name>
        <dbReference type="ChEBI" id="CHEBI:57540"/>
    </ligand>
</feature>
<feature type="binding site" evidence="1">
    <location>
        <position position="113"/>
    </location>
    <ligand>
        <name>NAD(+)</name>
        <dbReference type="ChEBI" id="CHEBI:57540"/>
    </ligand>
</feature>
<feature type="binding site" evidence="1">
    <location>
        <position position="136"/>
    </location>
    <ligand>
        <name>NAD(+)</name>
        <dbReference type="ChEBI" id="CHEBI:57540"/>
    </ligand>
</feature>
<feature type="binding site" evidence="1">
    <location>
        <position position="173"/>
    </location>
    <ligand>
        <name>NAD(+)</name>
        <dbReference type="ChEBI" id="CHEBI:57540"/>
    </ligand>
</feature>
<feature type="binding site" evidence="1">
    <location>
        <position position="290"/>
    </location>
    <ligand>
        <name>NAD(+)</name>
        <dbReference type="ChEBI" id="CHEBI:57540"/>
    </ligand>
</feature>
<feature type="binding site" evidence="1">
    <location>
        <position position="314"/>
    </location>
    <ligand>
        <name>NAD(+)</name>
        <dbReference type="ChEBI" id="CHEBI:57540"/>
    </ligand>
</feature>
<feature type="binding site" evidence="1">
    <location>
        <position position="408"/>
    </location>
    <ligand>
        <name>Zn(2+)</name>
        <dbReference type="ChEBI" id="CHEBI:29105"/>
    </ligand>
</feature>
<feature type="binding site" evidence="1">
    <location>
        <position position="411"/>
    </location>
    <ligand>
        <name>Zn(2+)</name>
        <dbReference type="ChEBI" id="CHEBI:29105"/>
    </ligand>
</feature>
<feature type="binding site" evidence="1">
    <location>
        <position position="426"/>
    </location>
    <ligand>
        <name>Zn(2+)</name>
        <dbReference type="ChEBI" id="CHEBI:29105"/>
    </ligand>
</feature>
<feature type="binding site" evidence="1">
    <location>
        <position position="432"/>
    </location>
    <ligand>
        <name>Zn(2+)</name>
        <dbReference type="ChEBI" id="CHEBI:29105"/>
    </ligand>
</feature>
<organism>
    <name type="scientific">Serratia proteamaculans (strain 568)</name>
    <dbReference type="NCBI Taxonomy" id="399741"/>
    <lineage>
        <taxon>Bacteria</taxon>
        <taxon>Pseudomonadati</taxon>
        <taxon>Pseudomonadota</taxon>
        <taxon>Gammaproteobacteria</taxon>
        <taxon>Enterobacterales</taxon>
        <taxon>Yersiniaceae</taxon>
        <taxon>Serratia</taxon>
    </lineage>
</organism>
<proteinExistence type="inferred from homology"/>
<gene>
    <name evidence="1" type="primary">ligA</name>
    <name type="ordered locus">Spro_3444</name>
</gene>
<accession>A8GHF2</accession>
<sequence length="673" mass="74140">MESIIQQINQLRTSLRHHEYQYHVLDAPEVPDAEYDRLMGELRALESAHPELITADSPTQRVGAAPLAAFDQVRHEVPMLSLDNVFDEESFLAFYKRVQDRLKSSDPLTFCCELKLDGLAVSLLYEDGELVRAATRGDGTTGENITSNVRTIRAIPLRLTGDNIPRRLEVRGEVFMPQAGFEQMNEEARRKDGKIFANPRNAAAGSIRQLDPRITAKRPLTFFCYGVGLLEGGELPRSHWQRLMQFKDWGLPVSDRAKRCTGSDEVLAFYRQVEQDRTQLGFDIDGVVVKIDDIDLQETLGFVARAPRWATAFKFPAQEQITQVREVEFQVGRTGAITPVARLEPVLVAGVIVSNATLHNADEIERLGLRIGDTVIVRRAGDVIPQVVGVIAERRPADAREILFPQHCPVCGSDVERVEGEAVARCTGGLICAAQRKEALKHFVSRRALDVDGMGDKIIEQLVEKEYVKNPADLFRLSAGILTGLDRMGPKSAQNLVNALEKSKQTTFARFLYALGIREVGEATAANLAAHFGTLDKLLAADIEALKEVPEVGEIVAKHTRHFLDEELNQQVIQELVSDEIGINWPAPVVIVAEEIDSPFAGKTVVLTGSLSQLSRDEAKDRLTALGAKVSGSVSKKTDLVIAGEAAGSKLVKAQELGIEVIDEAEMIRLLGA</sequence>
<comment type="function">
    <text evidence="1">DNA ligase that catalyzes the formation of phosphodiester linkages between 5'-phosphoryl and 3'-hydroxyl groups in double-stranded DNA using NAD as a coenzyme and as the energy source for the reaction. It is essential for DNA replication and repair of damaged DNA.</text>
</comment>
<comment type="catalytic activity">
    <reaction evidence="1">
        <text>NAD(+) + (deoxyribonucleotide)n-3'-hydroxyl + 5'-phospho-(deoxyribonucleotide)m = (deoxyribonucleotide)n+m + AMP + beta-nicotinamide D-nucleotide.</text>
        <dbReference type="EC" id="6.5.1.2"/>
    </reaction>
</comment>
<comment type="cofactor">
    <cofactor evidence="1">
        <name>Mg(2+)</name>
        <dbReference type="ChEBI" id="CHEBI:18420"/>
    </cofactor>
    <cofactor evidence="1">
        <name>Mn(2+)</name>
        <dbReference type="ChEBI" id="CHEBI:29035"/>
    </cofactor>
</comment>
<comment type="similarity">
    <text evidence="1">Belongs to the NAD-dependent DNA ligase family. LigA subfamily.</text>
</comment>
<reference key="1">
    <citation type="submission" date="2007-09" db="EMBL/GenBank/DDBJ databases">
        <title>Complete sequence of chromosome of Serratia proteamaculans 568.</title>
        <authorList>
            <consortium name="US DOE Joint Genome Institute"/>
            <person name="Copeland A."/>
            <person name="Lucas S."/>
            <person name="Lapidus A."/>
            <person name="Barry K."/>
            <person name="Glavina del Rio T."/>
            <person name="Dalin E."/>
            <person name="Tice H."/>
            <person name="Pitluck S."/>
            <person name="Chain P."/>
            <person name="Malfatti S."/>
            <person name="Shin M."/>
            <person name="Vergez L."/>
            <person name="Schmutz J."/>
            <person name="Larimer F."/>
            <person name="Land M."/>
            <person name="Hauser L."/>
            <person name="Kyrpides N."/>
            <person name="Kim E."/>
            <person name="Taghavi S."/>
            <person name="Newman L."/>
            <person name="Vangronsveld J."/>
            <person name="van der Lelie D."/>
            <person name="Richardson P."/>
        </authorList>
    </citation>
    <scope>NUCLEOTIDE SEQUENCE [LARGE SCALE GENOMIC DNA]</scope>
    <source>
        <strain>568</strain>
    </source>
</reference>
<protein>
    <recommendedName>
        <fullName evidence="1">DNA ligase</fullName>
        <ecNumber evidence="1">6.5.1.2</ecNumber>
    </recommendedName>
    <alternativeName>
        <fullName evidence="1">Polydeoxyribonucleotide synthase [NAD(+)]</fullName>
    </alternativeName>
</protein>
<keyword id="KW-0227">DNA damage</keyword>
<keyword id="KW-0234">DNA repair</keyword>
<keyword id="KW-0235">DNA replication</keyword>
<keyword id="KW-0436">Ligase</keyword>
<keyword id="KW-0460">Magnesium</keyword>
<keyword id="KW-0464">Manganese</keyword>
<keyword id="KW-0479">Metal-binding</keyword>
<keyword id="KW-0520">NAD</keyword>
<keyword id="KW-0862">Zinc</keyword>
<dbReference type="EC" id="6.5.1.2" evidence="1"/>
<dbReference type="EMBL" id="CP000826">
    <property type="protein sequence ID" value="ABV42542.1"/>
    <property type="molecule type" value="Genomic_DNA"/>
</dbReference>
<dbReference type="SMR" id="A8GHF2"/>
<dbReference type="STRING" id="399741.Spro_3444"/>
<dbReference type="KEGG" id="spe:Spro_3444"/>
<dbReference type="eggNOG" id="COG0272">
    <property type="taxonomic scope" value="Bacteria"/>
</dbReference>
<dbReference type="HOGENOM" id="CLU_007764_2_1_6"/>
<dbReference type="OrthoDB" id="9759736at2"/>
<dbReference type="GO" id="GO:0005829">
    <property type="term" value="C:cytosol"/>
    <property type="evidence" value="ECO:0007669"/>
    <property type="project" value="TreeGrafter"/>
</dbReference>
<dbReference type="GO" id="GO:0003677">
    <property type="term" value="F:DNA binding"/>
    <property type="evidence" value="ECO:0007669"/>
    <property type="project" value="InterPro"/>
</dbReference>
<dbReference type="GO" id="GO:0003911">
    <property type="term" value="F:DNA ligase (NAD+) activity"/>
    <property type="evidence" value="ECO:0007669"/>
    <property type="project" value="UniProtKB-UniRule"/>
</dbReference>
<dbReference type="GO" id="GO:0046872">
    <property type="term" value="F:metal ion binding"/>
    <property type="evidence" value="ECO:0007669"/>
    <property type="project" value="UniProtKB-KW"/>
</dbReference>
<dbReference type="GO" id="GO:0006281">
    <property type="term" value="P:DNA repair"/>
    <property type="evidence" value="ECO:0007669"/>
    <property type="project" value="UniProtKB-KW"/>
</dbReference>
<dbReference type="GO" id="GO:0006260">
    <property type="term" value="P:DNA replication"/>
    <property type="evidence" value="ECO:0007669"/>
    <property type="project" value="UniProtKB-KW"/>
</dbReference>
<dbReference type="CDD" id="cd17748">
    <property type="entry name" value="BRCT_DNA_ligase_like"/>
    <property type="match status" value="1"/>
</dbReference>
<dbReference type="CDD" id="cd00114">
    <property type="entry name" value="LIGANc"/>
    <property type="match status" value="1"/>
</dbReference>
<dbReference type="FunFam" id="1.10.150.20:FF:000006">
    <property type="entry name" value="DNA ligase"/>
    <property type="match status" value="1"/>
</dbReference>
<dbReference type="FunFam" id="1.10.150.20:FF:000007">
    <property type="entry name" value="DNA ligase"/>
    <property type="match status" value="1"/>
</dbReference>
<dbReference type="FunFam" id="1.10.287.610:FF:000002">
    <property type="entry name" value="DNA ligase"/>
    <property type="match status" value="1"/>
</dbReference>
<dbReference type="FunFam" id="2.40.50.140:FF:000012">
    <property type="entry name" value="DNA ligase"/>
    <property type="match status" value="1"/>
</dbReference>
<dbReference type="FunFam" id="3.30.470.30:FF:000001">
    <property type="entry name" value="DNA ligase"/>
    <property type="match status" value="1"/>
</dbReference>
<dbReference type="FunFam" id="3.40.50.10190:FF:000004">
    <property type="entry name" value="DNA ligase"/>
    <property type="match status" value="1"/>
</dbReference>
<dbReference type="FunFam" id="6.20.10.30:FF:000001">
    <property type="entry name" value="DNA ligase"/>
    <property type="match status" value="1"/>
</dbReference>
<dbReference type="Gene3D" id="6.20.10.30">
    <property type="match status" value="1"/>
</dbReference>
<dbReference type="Gene3D" id="1.10.150.20">
    <property type="entry name" value="5' to 3' exonuclease, C-terminal subdomain"/>
    <property type="match status" value="2"/>
</dbReference>
<dbReference type="Gene3D" id="3.40.50.10190">
    <property type="entry name" value="BRCT domain"/>
    <property type="match status" value="1"/>
</dbReference>
<dbReference type="Gene3D" id="3.30.470.30">
    <property type="entry name" value="DNA ligase/mRNA capping enzyme"/>
    <property type="match status" value="1"/>
</dbReference>
<dbReference type="Gene3D" id="1.10.287.610">
    <property type="entry name" value="Helix hairpin bin"/>
    <property type="match status" value="1"/>
</dbReference>
<dbReference type="Gene3D" id="2.40.50.140">
    <property type="entry name" value="Nucleic acid-binding proteins"/>
    <property type="match status" value="1"/>
</dbReference>
<dbReference type="HAMAP" id="MF_01588">
    <property type="entry name" value="DNA_ligase_A"/>
    <property type="match status" value="1"/>
</dbReference>
<dbReference type="InterPro" id="IPR001357">
    <property type="entry name" value="BRCT_dom"/>
</dbReference>
<dbReference type="InterPro" id="IPR036420">
    <property type="entry name" value="BRCT_dom_sf"/>
</dbReference>
<dbReference type="InterPro" id="IPR041663">
    <property type="entry name" value="DisA/LigA_HHH"/>
</dbReference>
<dbReference type="InterPro" id="IPR001679">
    <property type="entry name" value="DNA_ligase"/>
</dbReference>
<dbReference type="InterPro" id="IPR018239">
    <property type="entry name" value="DNA_ligase_AS"/>
</dbReference>
<dbReference type="InterPro" id="IPR033136">
    <property type="entry name" value="DNA_ligase_CS"/>
</dbReference>
<dbReference type="InterPro" id="IPR013839">
    <property type="entry name" value="DNAligase_adenylation"/>
</dbReference>
<dbReference type="InterPro" id="IPR013840">
    <property type="entry name" value="DNAligase_N"/>
</dbReference>
<dbReference type="InterPro" id="IPR003583">
    <property type="entry name" value="Hlx-hairpin-Hlx_DNA-bd_motif"/>
</dbReference>
<dbReference type="InterPro" id="IPR012340">
    <property type="entry name" value="NA-bd_OB-fold"/>
</dbReference>
<dbReference type="InterPro" id="IPR004150">
    <property type="entry name" value="NAD_DNA_ligase_OB"/>
</dbReference>
<dbReference type="InterPro" id="IPR010994">
    <property type="entry name" value="RuvA_2-like"/>
</dbReference>
<dbReference type="InterPro" id="IPR004149">
    <property type="entry name" value="Znf_DNAligase_C4"/>
</dbReference>
<dbReference type="NCBIfam" id="TIGR00575">
    <property type="entry name" value="dnlj"/>
    <property type="match status" value="1"/>
</dbReference>
<dbReference type="NCBIfam" id="NF005932">
    <property type="entry name" value="PRK07956.1"/>
    <property type="match status" value="1"/>
</dbReference>
<dbReference type="PANTHER" id="PTHR23389">
    <property type="entry name" value="CHROMOSOME TRANSMISSION FIDELITY FACTOR 18"/>
    <property type="match status" value="1"/>
</dbReference>
<dbReference type="PANTHER" id="PTHR23389:SF9">
    <property type="entry name" value="DNA LIGASE"/>
    <property type="match status" value="1"/>
</dbReference>
<dbReference type="Pfam" id="PF00533">
    <property type="entry name" value="BRCT"/>
    <property type="match status" value="1"/>
</dbReference>
<dbReference type="Pfam" id="PF01653">
    <property type="entry name" value="DNA_ligase_aden"/>
    <property type="match status" value="1"/>
</dbReference>
<dbReference type="Pfam" id="PF03120">
    <property type="entry name" value="DNA_ligase_OB"/>
    <property type="match status" value="1"/>
</dbReference>
<dbReference type="Pfam" id="PF03119">
    <property type="entry name" value="DNA_ligase_ZBD"/>
    <property type="match status" value="1"/>
</dbReference>
<dbReference type="Pfam" id="PF12826">
    <property type="entry name" value="HHH_2"/>
    <property type="match status" value="1"/>
</dbReference>
<dbReference type="Pfam" id="PF14520">
    <property type="entry name" value="HHH_5"/>
    <property type="match status" value="1"/>
</dbReference>
<dbReference type="Pfam" id="PF22745">
    <property type="entry name" value="Nlig-Ia"/>
    <property type="match status" value="1"/>
</dbReference>
<dbReference type="PIRSF" id="PIRSF001604">
    <property type="entry name" value="LigA"/>
    <property type="match status" value="1"/>
</dbReference>
<dbReference type="SMART" id="SM00292">
    <property type="entry name" value="BRCT"/>
    <property type="match status" value="1"/>
</dbReference>
<dbReference type="SMART" id="SM00278">
    <property type="entry name" value="HhH1"/>
    <property type="match status" value="4"/>
</dbReference>
<dbReference type="SMART" id="SM00532">
    <property type="entry name" value="LIGANc"/>
    <property type="match status" value="1"/>
</dbReference>
<dbReference type="SUPFAM" id="SSF52113">
    <property type="entry name" value="BRCT domain"/>
    <property type="match status" value="1"/>
</dbReference>
<dbReference type="SUPFAM" id="SSF56091">
    <property type="entry name" value="DNA ligase/mRNA capping enzyme, catalytic domain"/>
    <property type="match status" value="1"/>
</dbReference>
<dbReference type="SUPFAM" id="SSF50249">
    <property type="entry name" value="Nucleic acid-binding proteins"/>
    <property type="match status" value="1"/>
</dbReference>
<dbReference type="SUPFAM" id="SSF47781">
    <property type="entry name" value="RuvA domain 2-like"/>
    <property type="match status" value="1"/>
</dbReference>
<dbReference type="PROSITE" id="PS50172">
    <property type="entry name" value="BRCT"/>
    <property type="match status" value="1"/>
</dbReference>
<dbReference type="PROSITE" id="PS01055">
    <property type="entry name" value="DNA_LIGASE_N1"/>
    <property type="match status" value="1"/>
</dbReference>
<dbReference type="PROSITE" id="PS01056">
    <property type="entry name" value="DNA_LIGASE_N2"/>
    <property type="match status" value="1"/>
</dbReference>
<name>DNLJ_SERP5</name>
<evidence type="ECO:0000255" key="1">
    <source>
        <dbReference type="HAMAP-Rule" id="MF_01588"/>
    </source>
</evidence>